<proteinExistence type="evidence at protein level"/>
<accession>P42125</accession>
<accession>Q8QZV3</accession>
<reference key="1">
    <citation type="journal article" date="1993" name="FEBS Lett.">
        <title>Molecular cloning and gene organization of the mouse mitochondrial 3,2-trans-enoyl-CoA isomerase.</title>
        <authorList>
            <person name="Stoffel W."/>
            <person name="Dueker M."/>
            <person name="Hofmann K.O."/>
        </authorList>
    </citation>
    <scope>NUCLEOTIDE SEQUENCE [GENOMIC DNA / MRNA]</scope>
    <source>
        <tissue>Liver</tissue>
    </source>
</reference>
<reference key="2">
    <citation type="journal article" date="2005" name="Science">
        <title>The transcriptional landscape of the mammalian genome.</title>
        <authorList>
            <person name="Carninci P."/>
            <person name="Kasukawa T."/>
            <person name="Katayama S."/>
            <person name="Gough J."/>
            <person name="Frith M.C."/>
            <person name="Maeda N."/>
            <person name="Oyama R."/>
            <person name="Ravasi T."/>
            <person name="Lenhard B."/>
            <person name="Wells C."/>
            <person name="Kodzius R."/>
            <person name="Shimokawa K."/>
            <person name="Bajic V.B."/>
            <person name="Brenner S.E."/>
            <person name="Batalov S."/>
            <person name="Forrest A.R."/>
            <person name="Zavolan M."/>
            <person name="Davis M.J."/>
            <person name="Wilming L.G."/>
            <person name="Aidinis V."/>
            <person name="Allen J.E."/>
            <person name="Ambesi-Impiombato A."/>
            <person name="Apweiler R."/>
            <person name="Aturaliya R.N."/>
            <person name="Bailey T.L."/>
            <person name="Bansal M."/>
            <person name="Baxter L."/>
            <person name="Beisel K.W."/>
            <person name="Bersano T."/>
            <person name="Bono H."/>
            <person name="Chalk A.M."/>
            <person name="Chiu K.P."/>
            <person name="Choudhary V."/>
            <person name="Christoffels A."/>
            <person name="Clutterbuck D.R."/>
            <person name="Crowe M.L."/>
            <person name="Dalla E."/>
            <person name="Dalrymple B.P."/>
            <person name="de Bono B."/>
            <person name="Della Gatta G."/>
            <person name="di Bernardo D."/>
            <person name="Down T."/>
            <person name="Engstrom P."/>
            <person name="Fagiolini M."/>
            <person name="Faulkner G."/>
            <person name="Fletcher C.F."/>
            <person name="Fukushima T."/>
            <person name="Furuno M."/>
            <person name="Futaki S."/>
            <person name="Gariboldi M."/>
            <person name="Georgii-Hemming P."/>
            <person name="Gingeras T.R."/>
            <person name="Gojobori T."/>
            <person name="Green R.E."/>
            <person name="Gustincich S."/>
            <person name="Harbers M."/>
            <person name="Hayashi Y."/>
            <person name="Hensch T.K."/>
            <person name="Hirokawa N."/>
            <person name="Hill D."/>
            <person name="Huminiecki L."/>
            <person name="Iacono M."/>
            <person name="Ikeo K."/>
            <person name="Iwama A."/>
            <person name="Ishikawa T."/>
            <person name="Jakt M."/>
            <person name="Kanapin A."/>
            <person name="Katoh M."/>
            <person name="Kawasawa Y."/>
            <person name="Kelso J."/>
            <person name="Kitamura H."/>
            <person name="Kitano H."/>
            <person name="Kollias G."/>
            <person name="Krishnan S.P."/>
            <person name="Kruger A."/>
            <person name="Kummerfeld S.K."/>
            <person name="Kurochkin I.V."/>
            <person name="Lareau L.F."/>
            <person name="Lazarevic D."/>
            <person name="Lipovich L."/>
            <person name="Liu J."/>
            <person name="Liuni S."/>
            <person name="McWilliam S."/>
            <person name="Madan Babu M."/>
            <person name="Madera M."/>
            <person name="Marchionni L."/>
            <person name="Matsuda H."/>
            <person name="Matsuzawa S."/>
            <person name="Miki H."/>
            <person name="Mignone F."/>
            <person name="Miyake S."/>
            <person name="Morris K."/>
            <person name="Mottagui-Tabar S."/>
            <person name="Mulder N."/>
            <person name="Nakano N."/>
            <person name="Nakauchi H."/>
            <person name="Ng P."/>
            <person name="Nilsson R."/>
            <person name="Nishiguchi S."/>
            <person name="Nishikawa S."/>
            <person name="Nori F."/>
            <person name="Ohara O."/>
            <person name="Okazaki Y."/>
            <person name="Orlando V."/>
            <person name="Pang K.C."/>
            <person name="Pavan W.J."/>
            <person name="Pavesi G."/>
            <person name="Pesole G."/>
            <person name="Petrovsky N."/>
            <person name="Piazza S."/>
            <person name="Reed J."/>
            <person name="Reid J.F."/>
            <person name="Ring B.Z."/>
            <person name="Ringwald M."/>
            <person name="Rost B."/>
            <person name="Ruan Y."/>
            <person name="Salzberg S.L."/>
            <person name="Sandelin A."/>
            <person name="Schneider C."/>
            <person name="Schoenbach C."/>
            <person name="Sekiguchi K."/>
            <person name="Semple C.A."/>
            <person name="Seno S."/>
            <person name="Sessa L."/>
            <person name="Sheng Y."/>
            <person name="Shibata Y."/>
            <person name="Shimada H."/>
            <person name="Shimada K."/>
            <person name="Silva D."/>
            <person name="Sinclair B."/>
            <person name="Sperling S."/>
            <person name="Stupka E."/>
            <person name="Sugiura K."/>
            <person name="Sultana R."/>
            <person name="Takenaka Y."/>
            <person name="Taki K."/>
            <person name="Tammoja K."/>
            <person name="Tan S.L."/>
            <person name="Tang S."/>
            <person name="Taylor M.S."/>
            <person name="Tegner J."/>
            <person name="Teichmann S.A."/>
            <person name="Ueda H.R."/>
            <person name="van Nimwegen E."/>
            <person name="Verardo R."/>
            <person name="Wei C.L."/>
            <person name="Yagi K."/>
            <person name="Yamanishi H."/>
            <person name="Zabarovsky E."/>
            <person name="Zhu S."/>
            <person name="Zimmer A."/>
            <person name="Hide W."/>
            <person name="Bult C."/>
            <person name="Grimmond S.M."/>
            <person name="Teasdale R.D."/>
            <person name="Liu E.T."/>
            <person name="Brusic V."/>
            <person name="Quackenbush J."/>
            <person name="Wahlestedt C."/>
            <person name="Mattick J.S."/>
            <person name="Hume D.A."/>
            <person name="Kai C."/>
            <person name="Sasaki D."/>
            <person name="Tomaru Y."/>
            <person name="Fukuda S."/>
            <person name="Kanamori-Katayama M."/>
            <person name="Suzuki M."/>
            <person name="Aoki J."/>
            <person name="Arakawa T."/>
            <person name="Iida J."/>
            <person name="Imamura K."/>
            <person name="Itoh M."/>
            <person name="Kato T."/>
            <person name="Kawaji H."/>
            <person name="Kawagashira N."/>
            <person name="Kawashima T."/>
            <person name="Kojima M."/>
            <person name="Kondo S."/>
            <person name="Konno H."/>
            <person name="Nakano K."/>
            <person name="Ninomiya N."/>
            <person name="Nishio T."/>
            <person name="Okada M."/>
            <person name="Plessy C."/>
            <person name="Shibata K."/>
            <person name="Shiraki T."/>
            <person name="Suzuki S."/>
            <person name="Tagami M."/>
            <person name="Waki K."/>
            <person name="Watahiki A."/>
            <person name="Okamura-Oho Y."/>
            <person name="Suzuki H."/>
            <person name="Kawai J."/>
            <person name="Hayashizaki Y."/>
        </authorList>
    </citation>
    <scope>NUCLEOTIDE SEQUENCE [LARGE SCALE MRNA]</scope>
    <source>
        <strain>C57BL/6J</strain>
        <tissue>Head</tissue>
    </source>
</reference>
<reference key="3">
    <citation type="journal article" date="2009" name="PLoS Biol.">
        <title>Lineage-specific biology revealed by a finished genome assembly of the mouse.</title>
        <authorList>
            <person name="Church D.M."/>
            <person name="Goodstadt L."/>
            <person name="Hillier L.W."/>
            <person name="Zody M.C."/>
            <person name="Goldstein S."/>
            <person name="She X."/>
            <person name="Bult C.J."/>
            <person name="Agarwala R."/>
            <person name="Cherry J.L."/>
            <person name="DiCuccio M."/>
            <person name="Hlavina W."/>
            <person name="Kapustin Y."/>
            <person name="Meric P."/>
            <person name="Maglott D."/>
            <person name="Birtle Z."/>
            <person name="Marques A.C."/>
            <person name="Graves T."/>
            <person name="Zhou S."/>
            <person name="Teague B."/>
            <person name="Potamousis K."/>
            <person name="Churas C."/>
            <person name="Place M."/>
            <person name="Herschleb J."/>
            <person name="Runnheim R."/>
            <person name="Forrest D."/>
            <person name="Amos-Landgraf J."/>
            <person name="Schwartz D.C."/>
            <person name="Cheng Z."/>
            <person name="Lindblad-Toh K."/>
            <person name="Eichler E.E."/>
            <person name="Ponting C.P."/>
        </authorList>
    </citation>
    <scope>NUCLEOTIDE SEQUENCE [LARGE SCALE GENOMIC DNA]</scope>
    <source>
        <strain>C57BL/6J</strain>
    </source>
</reference>
<reference key="4">
    <citation type="submission" date="2005-07" db="EMBL/GenBank/DDBJ databases">
        <authorList>
            <person name="Mural R.J."/>
            <person name="Adams M.D."/>
            <person name="Myers E.W."/>
            <person name="Smith H.O."/>
            <person name="Venter J.C."/>
        </authorList>
    </citation>
    <scope>NUCLEOTIDE SEQUENCE [LARGE SCALE GENOMIC DNA]</scope>
</reference>
<reference key="5">
    <citation type="journal article" date="2004" name="Genome Res.">
        <title>The status, quality, and expansion of the NIH full-length cDNA project: the Mammalian Gene Collection (MGC).</title>
        <authorList>
            <consortium name="The MGC Project Team"/>
        </authorList>
    </citation>
    <scope>NUCLEOTIDE SEQUENCE [LARGE SCALE MRNA]</scope>
    <source>
        <strain>FVB/N</strain>
        <tissue>Colon</tissue>
        <tissue>Mammary tumor</tissue>
    </source>
</reference>
<reference key="6">
    <citation type="journal article" date="2010" name="Cell">
        <title>A tissue-specific atlas of mouse protein phosphorylation and expression.</title>
        <authorList>
            <person name="Huttlin E.L."/>
            <person name="Jedrychowski M.P."/>
            <person name="Elias J.E."/>
            <person name="Goswami T."/>
            <person name="Rad R."/>
            <person name="Beausoleil S.A."/>
            <person name="Villen J."/>
            <person name="Haas W."/>
            <person name="Sowa M.E."/>
            <person name="Gygi S.P."/>
        </authorList>
    </citation>
    <scope>IDENTIFICATION BY MASS SPECTROMETRY [LARGE SCALE ANALYSIS]</scope>
    <source>
        <tissue>Brain</tissue>
        <tissue>Brown adipose tissue</tissue>
        <tissue>Heart</tissue>
        <tissue>Kidney</tissue>
        <tissue>Liver</tissue>
        <tissue>Lung</tissue>
        <tissue>Pancreas</tissue>
        <tissue>Spleen</tissue>
        <tissue>Testis</tissue>
    </source>
</reference>
<reference key="7">
    <citation type="journal article" date="2013" name="Mol. Cell">
        <title>SIRT5-mediated lysine desuccinylation impacts diverse metabolic pathways.</title>
        <authorList>
            <person name="Park J."/>
            <person name="Chen Y."/>
            <person name="Tishkoff D.X."/>
            <person name="Peng C."/>
            <person name="Tan M."/>
            <person name="Dai L."/>
            <person name="Xie Z."/>
            <person name="Zhang Y."/>
            <person name="Zwaans B.M."/>
            <person name="Skinner M.E."/>
            <person name="Lombard D.B."/>
            <person name="Zhao Y."/>
        </authorList>
    </citation>
    <scope>SUCCINYLATION [LARGE SCALE ANALYSIS] AT LYS-48; LYS-71; LYS-222; LYS-229; LYS-255; LYS-270; LYS-275 AND LYS-283</scope>
    <scope>IDENTIFICATION BY MASS SPECTROMETRY [LARGE SCALE ANALYSIS]</scope>
    <source>
        <tissue>Liver</tissue>
    </source>
</reference>
<reference key="8">
    <citation type="journal article" date="2013" name="Proc. Natl. Acad. Sci. U.S.A.">
        <title>Label-free quantitative proteomics of the lysine acetylome in mitochondria identifies substrates of SIRT3 in metabolic pathways.</title>
        <authorList>
            <person name="Rardin M.J."/>
            <person name="Newman J.C."/>
            <person name="Held J.M."/>
            <person name="Cusack M.P."/>
            <person name="Sorensen D.J."/>
            <person name="Li B."/>
            <person name="Schilling B."/>
            <person name="Mooney S.D."/>
            <person name="Kahn C.R."/>
            <person name="Verdin E."/>
            <person name="Gibson B.W."/>
        </authorList>
    </citation>
    <scope>ACETYLATION [LARGE SCALE ANALYSIS] AT LYS-48; LYS-76; LYS-222; LYS-229; LYS-255; LYS-270 AND LYS-283</scope>
    <scope>IDENTIFICATION BY MASS SPECTROMETRY [LARGE SCALE ANALYSIS]</scope>
    <source>
        <tissue>Liver</tissue>
    </source>
</reference>
<keyword id="KW-0007">Acetylation</keyword>
<keyword id="KW-0276">Fatty acid metabolism</keyword>
<keyword id="KW-0413">Isomerase</keyword>
<keyword id="KW-0443">Lipid metabolism</keyword>
<keyword id="KW-0496">Mitochondrion</keyword>
<keyword id="KW-1185">Reference proteome</keyword>
<keyword id="KW-0809">Transit peptide</keyword>
<gene>
    <name evidence="5" type="primary">Eci1</name>
    <name type="synonym">Dci</name>
</gene>
<sequence>MALAAARRLLLHAGSRLGRREAVDGARRFANKRVLVETEGPAGVAVMKLRNPPVNSLSLECLTEFTISLEKLENDKSIRGVILTSECPGIFSAGLDLLEMYGRNPAHYAEYWKNVQELWLRLYTSNMILVSAINGASPAGGCLLALCCDYRVMADNPKYTIGLNESLLGIVAPFWFKDMYVNTIGHREAERALQLGTLFSPAEALKVGVVDEVVPEDQVHSKARSVMTKWLAIPDHSRQLTKNMMRKATADNLIKQREADIQNFTSFISKDSIQKSLHMYLEKLKQKKG</sequence>
<organism>
    <name type="scientific">Mus musculus</name>
    <name type="common">Mouse</name>
    <dbReference type="NCBI Taxonomy" id="10090"/>
    <lineage>
        <taxon>Eukaryota</taxon>
        <taxon>Metazoa</taxon>
        <taxon>Chordata</taxon>
        <taxon>Craniata</taxon>
        <taxon>Vertebrata</taxon>
        <taxon>Euteleostomi</taxon>
        <taxon>Mammalia</taxon>
        <taxon>Eutheria</taxon>
        <taxon>Euarchontoglires</taxon>
        <taxon>Glires</taxon>
        <taxon>Rodentia</taxon>
        <taxon>Myomorpha</taxon>
        <taxon>Muroidea</taxon>
        <taxon>Muridae</taxon>
        <taxon>Murinae</taxon>
        <taxon>Mus</taxon>
        <taxon>Mus</taxon>
    </lineage>
</organism>
<evidence type="ECO:0000250" key="1"/>
<evidence type="ECO:0000250" key="2">
    <source>
        <dbReference type="UniProtKB" id="P23965"/>
    </source>
</evidence>
<evidence type="ECO:0000250" key="3">
    <source>
        <dbReference type="UniProtKB" id="P42126"/>
    </source>
</evidence>
<evidence type="ECO:0000305" key="4"/>
<evidence type="ECO:0000312" key="5">
    <source>
        <dbReference type="MGI" id="MGI:94871"/>
    </source>
</evidence>
<evidence type="ECO:0007744" key="6">
    <source>
    </source>
</evidence>
<evidence type="ECO:0007744" key="7">
    <source>
    </source>
</evidence>
<dbReference type="EC" id="5.3.3.8" evidence="2"/>
<dbReference type="EMBL" id="Z14049">
    <property type="protein sequence ID" value="CAA78417.1"/>
    <property type="molecule type" value="mRNA"/>
</dbReference>
<dbReference type="EMBL" id="Z14050">
    <property type="protein sequence ID" value="CAA78418.1"/>
    <property type="molecule type" value="Genomic_DNA"/>
</dbReference>
<dbReference type="EMBL" id="Z14051">
    <property type="protein sequence ID" value="CAA78418.1"/>
    <property type="status" value="JOINED"/>
    <property type="molecule type" value="Genomic_DNA"/>
</dbReference>
<dbReference type="EMBL" id="Z14052">
    <property type="protein sequence ID" value="CAA78418.1"/>
    <property type="status" value="JOINED"/>
    <property type="molecule type" value="Genomic_DNA"/>
</dbReference>
<dbReference type="EMBL" id="Z14053">
    <property type="protein sequence ID" value="CAA78418.1"/>
    <property type="status" value="JOINED"/>
    <property type="molecule type" value="Genomic_DNA"/>
</dbReference>
<dbReference type="EMBL" id="Z14054">
    <property type="protein sequence ID" value="CAA78418.1"/>
    <property type="status" value="JOINED"/>
    <property type="molecule type" value="Genomic_DNA"/>
</dbReference>
<dbReference type="EMBL" id="AK029481">
    <property type="protein sequence ID" value="BAC26469.1"/>
    <property type="molecule type" value="mRNA"/>
</dbReference>
<dbReference type="EMBL" id="AC154237">
    <property type="status" value="NOT_ANNOTATED_CDS"/>
    <property type="molecule type" value="Genomic_DNA"/>
</dbReference>
<dbReference type="EMBL" id="CH466606">
    <property type="protein sequence ID" value="EDL22317.1"/>
    <property type="molecule type" value="Genomic_DNA"/>
</dbReference>
<dbReference type="EMBL" id="BC022712">
    <property type="protein sequence ID" value="AAH22712.1"/>
    <property type="molecule type" value="mRNA"/>
</dbReference>
<dbReference type="EMBL" id="BC054444">
    <property type="protein sequence ID" value="AAH54444.1"/>
    <property type="molecule type" value="mRNA"/>
</dbReference>
<dbReference type="CCDS" id="CCDS28480.1"/>
<dbReference type="PIR" id="S38770">
    <property type="entry name" value="S38770"/>
</dbReference>
<dbReference type="RefSeq" id="NP_034153.2">
    <property type="nucleotide sequence ID" value="NM_010023.4"/>
</dbReference>
<dbReference type="SMR" id="P42125"/>
<dbReference type="BioGRID" id="199065">
    <property type="interactions" value="32"/>
</dbReference>
<dbReference type="FunCoup" id="P42125">
    <property type="interactions" value="1293"/>
</dbReference>
<dbReference type="IntAct" id="P42125">
    <property type="interactions" value="2"/>
</dbReference>
<dbReference type="STRING" id="10090.ENSMUSP00000157291"/>
<dbReference type="GlyGen" id="P42125">
    <property type="glycosylation" value="1 site, 1 O-linked glycan (1 site)"/>
</dbReference>
<dbReference type="iPTMnet" id="P42125"/>
<dbReference type="PhosphoSitePlus" id="P42125"/>
<dbReference type="SwissPalm" id="P42125"/>
<dbReference type="jPOST" id="P42125"/>
<dbReference type="PaxDb" id="10090-ENSMUSP00000024946"/>
<dbReference type="PeptideAtlas" id="P42125"/>
<dbReference type="ProteomicsDB" id="277436"/>
<dbReference type="Pumba" id="P42125"/>
<dbReference type="Antibodypedia" id="23677">
    <property type="antibodies" value="282 antibodies from 32 providers"/>
</dbReference>
<dbReference type="DNASU" id="13177"/>
<dbReference type="Ensembl" id="ENSMUST00000234304.2">
    <property type="protein sequence ID" value="ENSMUSP00000157291.2"/>
    <property type="gene ID" value="ENSMUSG00000024132.7"/>
</dbReference>
<dbReference type="GeneID" id="13177"/>
<dbReference type="KEGG" id="mmu:13177"/>
<dbReference type="UCSC" id="uc008avv.2">
    <property type="organism name" value="mouse"/>
</dbReference>
<dbReference type="AGR" id="MGI:94871"/>
<dbReference type="CTD" id="1632"/>
<dbReference type="MGI" id="MGI:94871">
    <property type="gene designation" value="Eci1"/>
</dbReference>
<dbReference type="VEuPathDB" id="HostDB:ENSMUSG00000024132"/>
<dbReference type="eggNOG" id="KOG1683">
    <property type="taxonomic scope" value="Eukaryota"/>
</dbReference>
<dbReference type="GeneTree" id="ENSGT00390000005678"/>
<dbReference type="HOGENOM" id="CLU_009834_7_5_1"/>
<dbReference type="InParanoid" id="P42125"/>
<dbReference type="OMA" id="WFMSSFL"/>
<dbReference type="OrthoDB" id="1696280at2759"/>
<dbReference type="PhylomeDB" id="P42125"/>
<dbReference type="TreeFam" id="TF314436"/>
<dbReference type="Reactome" id="R-MMU-77288">
    <property type="pathway name" value="mitochondrial fatty acid beta-oxidation of unsaturated fatty acids"/>
</dbReference>
<dbReference type="Reactome" id="R-MMU-9837999">
    <property type="pathway name" value="Mitochondrial protein degradation"/>
</dbReference>
<dbReference type="UniPathway" id="UPA00659"/>
<dbReference type="BioGRID-ORCS" id="13177">
    <property type="hits" value="8 hits in 78 CRISPR screens"/>
</dbReference>
<dbReference type="ChiTaRS" id="Eci1">
    <property type="organism name" value="mouse"/>
</dbReference>
<dbReference type="PRO" id="PR:P42125"/>
<dbReference type="Proteomes" id="UP000000589">
    <property type="component" value="Chromosome 17"/>
</dbReference>
<dbReference type="RNAct" id="P42125">
    <property type="molecule type" value="protein"/>
</dbReference>
<dbReference type="Bgee" id="ENSMUSG00000024132">
    <property type="expression patterns" value="Expressed in heart right ventricle and 262 other cell types or tissues"/>
</dbReference>
<dbReference type="ExpressionAtlas" id="P42125">
    <property type="expression patterns" value="baseline and differential"/>
</dbReference>
<dbReference type="GO" id="GO:0005743">
    <property type="term" value="C:mitochondrial inner membrane"/>
    <property type="evidence" value="ECO:0007005"/>
    <property type="project" value="MGI"/>
</dbReference>
<dbReference type="GO" id="GO:0005759">
    <property type="term" value="C:mitochondrial matrix"/>
    <property type="evidence" value="ECO:0007669"/>
    <property type="project" value="UniProtKB-SubCell"/>
</dbReference>
<dbReference type="GO" id="GO:0005739">
    <property type="term" value="C:mitochondrion"/>
    <property type="evidence" value="ECO:0007005"/>
    <property type="project" value="MGI"/>
</dbReference>
<dbReference type="GO" id="GO:0004165">
    <property type="term" value="F:delta(3)-delta(2)-enoyl-CoA isomerase activity"/>
    <property type="evidence" value="ECO:0000314"/>
    <property type="project" value="MGI"/>
</dbReference>
<dbReference type="GO" id="GO:0006635">
    <property type="term" value="P:fatty acid beta-oxidation"/>
    <property type="evidence" value="ECO:0000315"/>
    <property type="project" value="MGI"/>
</dbReference>
<dbReference type="CDD" id="cd06558">
    <property type="entry name" value="crotonase-like"/>
    <property type="match status" value="1"/>
</dbReference>
<dbReference type="FunFam" id="3.90.226.10:FF:000034">
    <property type="entry name" value="Enoyl-CoA delta isomerase 1"/>
    <property type="match status" value="1"/>
</dbReference>
<dbReference type="Gene3D" id="6.10.250.170">
    <property type="match status" value="1"/>
</dbReference>
<dbReference type="Gene3D" id="3.90.226.10">
    <property type="entry name" value="2-enoyl-CoA Hydratase, Chain A, domain 1"/>
    <property type="match status" value="1"/>
</dbReference>
<dbReference type="InterPro" id="IPR029045">
    <property type="entry name" value="ClpP/crotonase-like_dom_sf"/>
</dbReference>
<dbReference type="InterPro" id="IPR018376">
    <property type="entry name" value="Enoyl-CoA_hyd/isom_CS"/>
</dbReference>
<dbReference type="InterPro" id="IPR001753">
    <property type="entry name" value="Enoyl-CoA_hydra/iso"/>
</dbReference>
<dbReference type="PANTHER" id="PTHR11941:SF45">
    <property type="entry name" value="ENOYL-COA DELTA ISOMERASE 1, MITOCHONDRIAL"/>
    <property type="match status" value="1"/>
</dbReference>
<dbReference type="PANTHER" id="PTHR11941">
    <property type="entry name" value="ENOYL-COA HYDRATASE-RELATED"/>
    <property type="match status" value="1"/>
</dbReference>
<dbReference type="Pfam" id="PF00378">
    <property type="entry name" value="ECH_1"/>
    <property type="match status" value="1"/>
</dbReference>
<dbReference type="SUPFAM" id="SSF52096">
    <property type="entry name" value="ClpP/crotonase"/>
    <property type="match status" value="1"/>
</dbReference>
<dbReference type="PROSITE" id="PS00166">
    <property type="entry name" value="ENOYL_COA_HYDRATASE"/>
    <property type="match status" value="1"/>
</dbReference>
<protein>
    <recommendedName>
        <fullName evidence="4">Enoyl-CoA delta isomerase 1, mitochondrial</fullName>
        <ecNumber evidence="2">5.3.3.8</ecNumber>
    </recommendedName>
    <alternativeName>
        <fullName>3,2-trans-enoyl-CoA isomerase</fullName>
    </alternativeName>
    <alternativeName>
        <fullName>Delta(3),Delta(2)-enoyl-CoA isomerase</fullName>
        <shortName>D3,D2-enoyl-CoA isomerase</shortName>
    </alternativeName>
    <alternativeName>
        <fullName>Dodecenoyl-CoA isomerase</fullName>
    </alternativeName>
</protein>
<comment type="function">
    <text evidence="2">Key enzyme of fatty acid beta-oxidation. Able to isomerize both 3-cis (3Z) and 3-trans (3E) double bonds into the 2-trans (2E) form in a range of enoyl-CoA species, with a preference for (3Z)-enoyl-CoAs over (3E)-enoyl-CoAs. The catalytic efficiency of this enzyme is not affected by the fatty acyl chain length.</text>
</comment>
<comment type="catalytic activity">
    <reaction evidence="2">
        <text>a (3Z)-enoyl-CoA = a 4-saturated (2E)-enoyl-CoA</text>
        <dbReference type="Rhea" id="RHEA:45900"/>
        <dbReference type="ChEBI" id="CHEBI:85097"/>
        <dbReference type="ChEBI" id="CHEBI:85489"/>
        <dbReference type="EC" id="5.3.3.8"/>
    </reaction>
</comment>
<comment type="catalytic activity">
    <reaction evidence="2">
        <text>a (3E)-enoyl-CoA = a 4-saturated (2E)-enoyl-CoA</text>
        <dbReference type="Rhea" id="RHEA:45228"/>
        <dbReference type="ChEBI" id="CHEBI:58521"/>
        <dbReference type="ChEBI" id="CHEBI:85097"/>
        <dbReference type="EC" id="5.3.3.8"/>
    </reaction>
    <physiologicalReaction direction="left-to-right" evidence="2">
        <dbReference type="Rhea" id="RHEA:45229"/>
    </physiologicalReaction>
</comment>
<comment type="catalytic activity">
    <reaction evidence="2">
        <text>(3Z)-octenoyl-CoA = (2E)-octenoyl-CoA</text>
        <dbReference type="Rhea" id="RHEA:46044"/>
        <dbReference type="ChEBI" id="CHEBI:62242"/>
        <dbReference type="ChEBI" id="CHEBI:85640"/>
    </reaction>
    <physiologicalReaction direction="left-to-right" evidence="2">
        <dbReference type="Rhea" id="RHEA:46045"/>
    </physiologicalReaction>
</comment>
<comment type="catalytic activity">
    <reaction evidence="2">
        <text>(2E)-tetradecenoyl-CoA = (3Z)-tetradecenoyl-CoA</text>
        <dbReference type="Rhea" id="RHEA:29847"/>
        <dbReference type="ChEBI" id="CHEBI:61405"/>
        <dbReference type="ChEBI" id="CHEBI:61968"/>
    </reaction>
    <physiologicalReaction direction="right-to-left" evidence="2">
        <dbReference type="Rhea" id="RHEA:29849"/>
    </physiologicalReaction>
</comment>
<comment type="catalytic activity">
    <reaction evidence="2">
        <text>(3Z)-dodecenoyl-CoA = (2E)-dodecenoyl-CoA</text>
        <dbReference type="Rhea" id="RHEA:23716"/>
        <dbReference type="ChEBI" id="CHEBI:57330"/>
        <dbReference type="ChEBI" id="CHEBI:58543"/>
        <dbReference type="EC" id="5.3.3.8"/>
    </reaction>
    <physiologicalReaction direction="left-to-right" evidence="2">
        <dbReference type="Rhea" id="RHEA:23717"/>
    </physiologicalReaction>
</comment>
<comment type="catalytic activity">
    <reaction evidence="2">
        <text>(3Z)-hexenoyl-CoA = (2E)-hexenoyl-CoA</text>
        <dbReference type="Rhea" id="RHEA:45748"/>
        <dbReference type="ChEBI" id="CHEBI:62077"/>
        <dbReference type="ChEBI" id="CHEBI:85415"/>
    </reaction>
    <physiologicalReaction direction="left-to-right" evidence="2">
        <dbReference type="Rhea" id="RHEA:45749"/>
    </physiologicalReaction>
</comment>
<comment type="catalytic activity">
    <reaction evidence="2">
        <text>(3Z)-decenoyl-CoA = (2E)-decenoyl-CoA</text>
        <dbReference type="Rhea" id="RHEA:77195"/>
        <dbReference type="ChEBI" id="CHEBI:61406"/>
        <dbReference type="ChEBI" id="CHEBI:195601"/>
    </reaction>
    <physiologicalReaction direction="left-to-right" evidence="2">
        <dbReference type="Rhea" id="RHEA:77196"/>
    </physiologicalReaction>
</comment>
<comment type="pathway">
    <text evidence="2">Lipid metabolism; fatty acid beta-oxidation.</text>
</comment>
<comment type="subunit">
    <text evidence="2">Homotrimer.</text>
</comment>
<comment type="subcellular location">
    <subcellularLocation>
        <location evidence="2">Mitochondrion matrix</location>
    </subcellularLocation>
</comment>
<comment type="similarity">
    <text evidence="4">Belongs to the enoyl-CoA hydratase/isomerase family.</text>
</comment>
<feature type="transit peptide" description="Mitochondrion" evidence="1">
    <location>
        <begin position="1"/>
        <end position="28"/>
    </location>
</feature>
<feature type="chain" id="PRO_0000007421" description="Enoyl-CoA delta isomerase 1, mitochondrial">
    <location>
        <begin position="29"/>
        <end position="289"/>
    </location>
</feature>
<feature type="binding site" evidence="3">
    <location>
        <begin position="93"/>
        <end position="97"/>
    </location>
    <ligand>
        <name>substrate</name>
    </ligand>
</feature>
<feature type="binding site" evidence="3">
    <location>
        <position position="140"/>
    </location>
    <ligand>
        <name>substrate</name>
    </ligand>
</feature>
<feature type="binding site" evidence="3">
    <location>
        <position position="164"/>
    </location>
    <ligand>
        <name>substrate</name>
    </ligand>
</feature>
<feature type="site" description="Important for catalytic activity" evidence="3">
    <location>
        <position position="165"/>
    </location>
</feature>
<feature type="modified residue" description="N6-acetyllysine; alternate" evidence="6">
    <location>
        <position position="48"/>
    </location>
</feature>
<feature type="modified residue" description="N6-succinyllysine; alternate" evidence="7">
    <location>
        <position position="48"/>
    </location>
</feature>
<feature type="modified residue" description="N6-succinyllysine" evidence="7">
    <location>
        <position position="71"/>
    </location>
</feature>
<feature type="modified residue" description="N6-acetyllysine" evidence="6">
    <location>
        <position position="76"/>
    </location>
</feature>
<feature type="modified residue" description="N6-acetyllysine; alternate" evidence="6">
    <location>
        <position position="222"/>
    </location>
</feature>
<feature type="modified residue" description="N6-succinyllysine; alternate" evidence="7">
    <location>
        <position position="222"/>
    </location>
</feature>
<feature type="modified residue" description="N6-acetyllysine; alternate" evidence="6">
    <location>
        <position position="229"/>
    </location>
</feature>
<feature type="modified residue" description="N6-succinyllysine; alternate" evidence="7">
    <location>
        <position position="229"/>
    </location>
</feature>
<feature type="modified residue" description="N6-acetyllysine; alternate" evidence="6">
    <location>
        <position position="255"/>
    </location>
</feature>
<feature type="modified residue" description="N6-succinyllysine; alternate" evidence="7">
    <location>
        <position position="255"/>
    </location>
</feature>
<feature type="modified residue" description="N6-acetyllysine; alternate" evidence="6">
    <location>
        <position position="270"/>
    </location>
</feature>
<feature type="modified residue" description="N6-succinyllysine; alternate" evidence="7">
    <location>
        <position position="270"/>
    </location>
</feature>
<feature type="modified residue" description="N6-succinyllysine" evidence="7">
    <location>
        <position position="275"/>
    </location>
</feature>
<feature type="modified residue" description="N6-acetyllysine; alternate" evidence="6">
    <location>
        <position position="283"/>
    </location>
</feature>
<feature type="modified residue" description="N6-succinyllysine; alternate" evidence="7">
    <location>
        <position position="283"/>
    </location>
</feature>
<feature type="sequence conflict" description="In Ref. 1; CAA78417/CAA78418." evidence="4" ref="1">
    <original>R</original>
    <variation>P</variation>
    <location>
        <position position="28"/>
    </location>
</feature>
<feature type="sequence conflict" description="In Ref. 1; CAA78417/CAA78418." evidence="4" ref="1">
    <original>ER</original>
    <variation>DG</variation>
    <location>
        <begin position="190"/>
        <end position="191"/>
    </location>
</feature>
<name>ECI1_MOUSE</name>